<keyword id="KW-0067">ATP-binding</keyword>
<keyword id="KW-0963">Cytoplasm</keyword>
<keyword id="KW-0547">Nucleotide-binding</keyword>
<keyword id="KW-0539">Nucleus</keyword>
<keyword id="KW-0647">Proteasome</keyword>
<keyword id="KW-1185">Reference proteome</keyword>
<protein>
    <recommendedName>
        <fullName>Probable 26S proteasome regulatory subunit 6B</fullName>
    </recommendedName>
</protein>
<comment type="function">
    <text evidence="1">The 26S proteasome is involved in the ATP-dependent degradation of ubiquitinated proteins. The regulatory (or ATPase) complex confers ATP dependency and substrate specificity to the 26S complex (By similarity).</text>
</comment>
<comment type="subcellular location">
    <subcellularLocation>
        <location evidence="3">Cytoplasm</location>
    </subcellularLocation>
    <subcellularLocation>
        <location evidence="3">Nucleus</location>
    </subcellularLocation>
</comment>
<comment type="similarity">
    <text evidence="3">Belongs to the AAA ATPase family.</text>
</comment>
<sequence length="414" mass="46358">MSAAALEEIGIAPLQENTSLRPPPLPATCVDVSSDDYIKLTTLERQLAHLQVMEDYIKLETRNLEKELLHAQEEVKRIQSVPLVIGQFLEAVDQNHAIVGSTTGSNYYVRVLSILDRELLKPGCSVALHKYSNALVDVLPPEADSSIQMLRPDEKPDISYGDIGGLDMQKQEVREAVELPLTHGELYQQIGIDPPRGVLMYGPPGCGKTMLAKAVAANTAASFIRVVGSEFVQKYLGEGPRMVRDVFRLAKENSPSIIFIDEIDAIATKRFDAQTGADREVQRILLELLNQMDGFDQSTNVKVIMATNRQDTLDPALLRPGRLDRKIEFPLPDRRQKRLVFSTVCSRMNLSDDVDLEDWVARPDKISGADINSICQEAGMQAVRENRYVVLTKDLEKAYKNVVKKDTNDFEFYK</sequence>
<accession>P46502</accession>
<name>PRS6B_CAEEL</name>
<feature type="chain" id="PRO_0000084690" description="Probable 26S proteasome regulatory subunit 6B">
    <location>
        <begin position="1"/>
        <end position="414"/>
    </location>
</feature>
<feature type="binding site" evidence="2">
    <location>
        <begin position="202"/>
        <end position="209"/>
    </location>
    <ligand>
        <name>ATP</name>
        <dbReference type="ChEBI" id="CHEBI:30616"/>
    </ligand>
</feature>
<evidence type="ECO:0000250" key="1"/>
<evidence type="ECO:0000255" key="2"/>
<evidence type="ECO:0000305" key="3"/>
<proteinExistence type="inferred from homology"/>
<dbReference type="EMBL" id="FO081210">
    <property type="protein sequence ID" value="CCD69926.1"/>
    <property type="molecule type" value="Genomic_DNA"/>
</dbReference>
<dbReference type="PIR" id="A88485">
    <property type="entry name" value="A88485"/>
</dbReference>
<dbReference type="RefSeq" id="NP_498429.1">
    <property type="nucleotide sequence ID" value="NM_066028.5"/>
</dbReference>
<dbReference type="SMR" id="P46502"/>
<dbReference type="BioGRID" id="41143">
    <property type="interactions" value="44"/>
</dbReference>
<dbReference type="DIP" id="DIP-24412N"/>
<dbReference type="FunCoup" id="P46502">
    <property type="interactions" value="2865"/>
</dbReference>
<dbReference type="IntAct" id="P46502">
    <property type="interactions" value="2"/>
</dbReference>
<dbReference type="STRING" id="6239.F23F12.6.2"/>
<dbReference type="PaxDb" id="6239-F23F12.6"/>
<dbReference type="PeptideAtlas" id="P46502"/>
<dbReference type="EnsemblMetazoa" id="F23F12.6.1">
    <property type="protein sequence ID" value="F23F12.6.1"/>
    <property type="gene ID" value="WBGene00004503"/>
</dbReference>
<dbReference type="GeneID" id="175925"/>
<dbReference type="KEGG" id="cel:CELE_F23F12.6"/>
<dbReference type="UCSC" id="F23F12.6.1">
    <property type="organism name" value="c. elegans"/>
</dbReference>
<dbReference type="AGR" id="WB:WBGene00004503"/>
<dbReference type="CTD" id="175925"/>
<dbReference type="WormBase" id="F23F12.6">
    <property type="protein sequence ID" value="CE01253"/>
    <property type="gene ID" value="WBGene00004503"/>
    <property type="gene designation" value="rpt-3"/>
</dbReference>
<dbReference type="eggNOG" id="KOG0727">
    <property type="taxonomic scope" value="Eukaryota"/>
</dbReference>
<dbReference type="GeneTree" id="ENSGT01020000230346"/>
<dbReference type="HOGENOM" id="CLU_000688_2_0_1"/>
<dbReference type="InParanoid" id="P46502"/>
<dbReference type="OMA" id="QDIGGMD"/>
<dbReference type="OrthoDB" id="10255768at2759"/>
<dbReference type="PhylomeDB" id="P46502"/>
<dbReference type="Reactome" id="R-CEL-1234176">
    <property type="pathway name" value="Oxygen-dependent proline hydroxylation of Hypoxia-inducible Factor Alpha"/>
</dbReference>
<dbReference type="Reactome" id="R-CEL-1236978">
    <property type="pathway name" value="Cross-presentation of soluble exogenous antigens (endosomes)"/>
</dbReference>
<dbReference type="Reactome" id="R-CEL-187577">
    <property type="pathway name" value="SCF(Skp2)-mediated degradation of p27/p21"/>
</dbReference>
<dbReference type="Reactome" id="R-CEL-195253">
    <property type="pathway name" value="Degradation of beta-catenin by the destruction complex"/>
</dbReference>
<dbReference type="Reactome" id="R-CEL-349425">
    <property type="pathway name" value="Autodegradation of the E3 ubiquitin ligase COP1"/>
</dbReference>
<dbReference type="Reactome" id="R-CEL-350562">
    <property type="pathway name" value="Regulation of ornithine decarboxylase (ODC)"/>
</dbReference>
<dbReference type="Reactome" id="R-CEL-382556">
    <property type="pathway name" value="ABC-family proteins mediated transport"/>
</dbReference>
<dbReference type="Reactome" id="R-CEL-4608870">
    <property type="pathway name" value="Asymmetric localization of PCP proteins"/>
</dbReference>
<dbReference type="Reactome" id="R-CEL-4641258">
    <property type="pathway name" value="Degradation of DVL"/>
</dbReference>
<dbReference type="Reactome" id="R-CEL-5632684">
    <property type="pathway name" value="Hedgehog 'on' state"/>
</dbReference>
<dbReference type="Reactome" id="R-CEL-5687128">
    <property type="pathway name" value="MAPK6/MAPK4 signaling"/>
</dbReference>
<dbReference type="Reactome" id="R-CEL-5689603">
    <property type="pathway name" value="UCH proteinases"/>
</dbReference>
<dbReference type="Reactome" id="R-CEL-5689880">
    <property type="pathway name" value="Ub-specific processing proteases"/>
</dbReference>
<dbReference type="Reactome" id="R-CEL-68949">
    <property type="pathway name" value="Orc1 removal from chromatin"/>
</dbReference>
<dbReference type="Reactome" id="R-CEL-69017">
    <property type="pathway name" value="CDK-mediated phosphorylation and removal of Cdc6"/>
</dbReference>
<dbReference type="Reactome" id="R-CEL-69601">
    <property type="pathway name" value="Ubiquitin Mediated Degradation of Phosphorylated Cdc25A"/>
</dbReference>
<dbReference type="Reactome" id="R-CEL-75815">
    <property type="pathway name" value="Ubiquitin-dependent degradation of Cyclin D"/>
</dbReference>
<dbReference type="Reactome" id="R-CEL-8854050">
    <property type="pathway name" value="FBXL7 down-regulates AURKA during mitotic entry and in early mitosis"/>
</dbReference>
<dbReference type="Reactome" id="R-CEL-8939902">
    <property type="pathway name" value="Regulation of RUNX2 expression and activity"/>
</dbReference>
<dbReference type="Reactome" id="R-CEL-8941858">
    <property type="pathway name" value="Regulation of RUNX3 expression and activity"/>
</dbReference>
<dbReference type="Reactome" id="R-CEL-8948751">
    <property type="pathway name" value="Regulation of PTEN stability and activity"/>
</dbReference>
<dbReference type="Reactome" id="R-CEL-8951664">
    <property type="pathway name" value="Neddylation"/>
</dbReference>
<dbReference type="Reactome" id="R-CEL-9755511">
    <property type="pathway name" value="KEAP1-NFE2L2 pathway"/>
</dbReference>
<dbReference type="Reactome" id="R-CEL-9762114">
    <property type="pathway name" value="GSK3B and BTRC:CUL1-mediated-degradation of NFE2L2"/>
</dbReference>
<dbReference type="Reactome" id="R-CEL-983168">
    <property type="pathway name" value="Antigen processing: Ubiquitination &amp; Proteasome degradation"/>
</dbReference>
<dbReference type="Reactome" id="R-CEL-9907900">
    <property type="pathway name" value="Proteasome assembly"/>
</dbReference>
<dbReference type="PRO" id="PR:P46502"/>
<dbReference type="Proteomes" id="UP000001940">
    <property type="component" value="Chromosome III"/>
</dbReference>
<dbReference type="Bgee" id="WBGene00004503">
    <property type="expression patterns" value="Expressed in germ line (C elegans) and 4 other cell types or tissues"/>
</dbReference>
<dbReference type="GO" id="GO:0005737">
    <property type="term" value="C:cytoplasm"/>
    <property type="evidence" value="ECO:0007669"/>
    <property type="project" value="UniProtKB-SubCell"/>
</dbReference>
<dbReference type="GO" id="GO:0005634">
    <property type="term" value="C:nucleus"/>
    <property type="evidence" value="ECO:0007669"/>
    <property type="project" value="UniProtKB-SubCell"/>
</dbReference>
<dbReference type="GO" id="GO:0008540">
    <property type="term" value="C:proteasome regulatory particle, base subcomplex"/>
    <property type="evidence" value="ECO:0000318"/>
    <property type="project" value="GO_Central"/>
</dbReference>
<dbReference type="GO" id="GO:0005524">
    <property type="term" value="F:ATP binding"/>
    <property type="evidence" value="ECO:0007669"/>
    <property type="project" value="UniProtKB-KW"/>
</dbReference>
<dbReference type="GO" id="GO:0016887">
    <property type="term" value="F:ATP hydrolysis activity"/>
    <property type="evidence" value="ECO:0007669"/>
    <property type="project" value="InterPro"/>
</dbReference>
<dbReference type="GO" id="GO:0036402">
    <property type="term" value="F:proteasome-activating activity"/>
    <property type="evidence" value="ECO:0000318"/>
    <property type="project" value="GO_Central"/>
</dbReference>
<dbReference type="GO" id="GO:0043161">
    <property type="term" value="P:proteasome-mediated ubiquitin-dependent protein catabolic process"/>
    <property type="evidence" value="ECO:0000318"/>
    <property type="project" value="GO_Central"/>
</dbReference>
<dbReference type="FunFam" id="1.10.8.60:FF:000018">
    <property type="entry name" value="26S protease regulatory subunit 6B"/>
    <property type="match status" value="1"/>
</dbReference>
<dbReference type="FunFam" id="2.40.50.140:FF:000049">
    <property type="entry name" value="26S protease regulatory subunit 6B"/>
    <property type="match status" value="1"/>
</dbReference>
<dbReference type="FunFam" id="3.40.50.300:FF:000033">
    <property type="entry name" value="26S protease regulatory subunit 6B"/>
    <property type="match status" value="1"/>
</dbReference>
<dbReference type="Gene3D" id="1.10.8.60">
    <property type="match status" value="1"/>
</dbReference>
<dbReference type="Gene3D" id="2.40.50.140">
    <property type="entry name" value="Nucleic acid-binding proteins"/>
    <property type="match status" value="1"/>
</dbReference>
<dbReference type="Gene3D" id="3.40.50.300">
    <property type="entry name" value="P-loop containing nucleotide triphosphate hydrolases"/>
    <property type="match status" value="1"/>
</dbReference>
<dbReference type="InterPro" id="IPR050221">
    <property type="entry name" value="26S_Proteasome_ATPase"/>
</dbReference>
<dbReference type="InterPro" id="IPR003593">
    <property type="entry name" value="AAA+_ATPase"/>
</dbReference>
<dbReference type="InterPro" id="IPR041569">
    <property type="entry name" value="AAA_lid_3"/>
</dbReference>
<dbReference type="InterPro" id="IPR003959">
    <property type="entry name" value="ATPase_AAA_core"/>
</dbReference>
<dbReference type="InterPro" id="IPR003960">
    <property type="entry name" value="ATPase_AAA_CS"/>
</dbReference>
<dbReference type="InterPro" id="IPR012340">
    <property type="entry name" value="NA-bd_OB-fold"/>
</dbReference>
<dbReference type="InterPro" id="IPR027417">
    <property type="entry name" value="P-loop_NTPase"/>
</dbReference>
<dbReference type="InterPro" id="IPR032501">
    <property type="entry name" value="Prot_ATP_ID_OB_2nd"/>
</dbReference>
<dbReference type="PANTHER" id="PTHR23073">
    <property type="entry name" value="26S PROTEASOME REGULATORY SUBUNIT"/>
    <property type="match status" value="1"/>
</dbReference>
<dbReference type="Pfam" id="PF00004">
    <property type="entry name" value="AAA"/>
    <property type="match status" value="1"/>
</dbReference>
<dbReference type="Pfam" id="PF17862">
    <property type="entry name" value="AAA_lid_3"/>
    <property type="match status" value="1"/>
</dbReference>
<dbReference type="Pfam" id="PF16450">
    <property type="entry name" value="Prot_ATP_ID_OB_C"/>
    <property type="match status" value="1"/>
</dbReference>
<dbReference type="SMART" id="SM00382">
    <property type="entry name" value="AAA"/>
    <property type="match status" value="1"/>
</dbReference>
<dbReference type="SUPFAM" id="SSF52540">
    <property type="entry name" value="P-loop containing nucleoside triphosphate hydrolases"/>
    <property type="match status" value="1"/>
</dbReference>
<dbReference type="PROSITE" id="PS00674">
    <property type="entry name" value="AAA"/>
    <property type="match status" value="1"/>
</dbReference>
<organism>
    <name type="scientific">Caenorhabditis elegans</name>
    <dbReference type="NCBI Taxonomy" id="6239"/>
    <lineage>
        <taxon>Eukaryota</taxon>
        <taxon>Metazoa</taxon>
        <taxon>Ecdysozoa</taxon>
        <taxon>Nematoda</taxon>
        <taxon>Chromadorea</taxon>
        <taxon>Rhabditida</taxon>
        <taxon>Rhabditina</taxon>
        <taxon>Rhabditomorpha</taxon>
        <taxon>Rhabditoidea</taxon>
        <taxon>Rhabditidae</taxon>
        <taxon>Peloderinae</taxon>
        <taxon>Caenorhabditis</taxon>
    </lineage>
</organism>
<gene>
    <name type="primary">rpt-3</name>
    <name type="ORF">F23F12.6</name>
</gene>
<reference key="1">
    <citation type="journal article" date="1998" name="Science">
        <title>Genome sequence of the nematode C. elegans: a platform for investigating biology.</title>
        <authorList>
            <consortium name="The C. elegans sequencing consortium"/>
        </authorList>
    </citation>
    <scope>NUCLEOTIDE SEQUENCE [LARGE SCALE GENOMIC DNA]</scope>
    <source>
        <strain>Bristol N2</strain>
    </source>
</reference>